<name>ACTH_RAT</name>
<dbReference type="EC" id="3.6.4.-" evidence="5"/>
<dbReference type="EMBL" id="M22323">
    <property type="protein sequence ID" value="AAA40672.1"/>
    <property type="molecule type" value="mRNA"/>
</dbReference>
<dbReference type="EMBL" id="BC087689">
    <property type="protein sequence ID" value="AAH87689.1"/>
    <property type="molecule type" value="mRNA"/>
</dbReference>
<dbReference type="PIR" id="A31375">
    <property type="entry name" value="A31375"/>
</dbReference>
<dbReference type="RefSeq" id="NP_037025.1">
    <property type="nucleotide sequence ID" value="NM_012893.1"/>
</dbReference>
<dbReference type="RefSeq" id="XP_006236790.1">
    <property type="nucleotide sequence ID" value="XM_006236728.4"/>
</dbReference>
<dbReference type="SMR" id="P63269"/>
<dbReference type="BioGRID" id="247404">
    <property type="interactions" value="2"/>
</dbReference>
<dbReference type="FunCoup" id="P63269">
    <property type="interactions" value="274"/>
</dbReference>
<dbReference type="IntAct" id="P63269">
    <property type="interactions" value="3"/>
</dbReference>
<dbReference type="MINT" id="P63269"/>
<dbReference type="STRING" id="10116.ENSRNOP00000050322"/>
<dbReference type="iPTMnet" id="P63269"/>
<dbReference type="PhosphoSitePlus" id="P63269"/>
<dbReference type="jPOST" id="P63269"/>
<dbReference type="PaxDb" id="10116-ENSRNOP00000050322"/>
<dbReference type="Ensembl" id="ENSRNOT00000042699.5">
    <property type="protein sequence ID" value="ENSRNOP00000050322.2"/>
    <property type="gene ID" value="ENSRNOG00000029401.6"/>
</dbReference>
<dbReference type="GeneID" id="25365"/>
<dbReference type="KEGG" id="rno:25365"/>
<dbReference type="UCSC" id="RGD:2027">
    <property type="organism name" value="rat"/>
</dbReference>
<dbReference type="AGR" id="RGD:2027"/>
<dbReference type="CTD" id="72"/>
<dbReference type="RGD" id="2027">
    <property type="gene designation" value="Actg2"/>
</dbReference>
<dbReference type="eggNOG" id="KOG0676">
    <property type="taxonomic scope" value="Eukaryota"/>
</dbReference>
<dbReference type="GeneTree" id="ENSGT00940000154148"/>
<dbReference type="HOGENOM" id="CLU_027965_0_2_1"/>
<dbReference type="InParanoid" id="P63269"/>
<dbReference type="OMA" id="PXEREIV"/>
<dbReference type="OrthoDB" id="3107at9989"/>
<dbReference type="PhylomeDB" id="P63269"/>
<dbReference type="Reactome" id="R-RNO-445355">
    <property type="pathway name" value="Smooth Muscle Contraction"/>
</dbReference>
<dbReference type="Reactome" id="R-RNO-9913351">
    <property type="pathway name" value="Formation of the dystrophin-glycoprotein complex (DGC)"/>
</dbReference>
<dbReference type="PRO" id="PR:P63269"/>
<dbReference type="Proteomes" id="UP000002494">
    <property type="component" value="Chromosome 4"/>
</dbReference>
<dbReference type="Bgee" id="ENSRNOG00000029401">
    <property type="expression patterns" value="Expressed in colon and 19 other cell types or tissues"/>
</dbReference>
<dbReference type="GO" id="GO:0015629">
    <property type="term" value="C:actin cytoskeleton"/>
    <property type="evidence" value="ECO:0000318"/>
    <property type="project" value="GO_Central"/>
</dbReference>
<dbReference type="GO" id="GO:0044297">
    <property type="term" value="C:cell body"/>
    <property type="evidence" value="ECO:0000250"/>
    <property type="project" value="AgBase"/>
</dbReference>
<dbReference type="GO" id="GO:0071944">
    <property type="term" value="C:cell periphery"/>
    <property type="evidence" value="ECO:0000266"/>
    <property type="project" value="RGD"/>
</dbReference>
<dbReference type="GO" id="GO:0005737">
    <property type="term" value="C:cytoplasm"/>
    <property type="evidence" value="ECO:0000250"/>
    <property type="project" value="AgBase"/>
</dbReference>
<dbReference type="GO" id="GO:0030175">
    <property type="term" value="C:filopodium"/>
    <property type="evidence" value="ECO:0000250"/>
    <property type="project" value="AgBase"/>
</dbReference>
<dbReference type="GO" id="GO:0030027">
    <property type="term" value="C:lamellipodium"/>
    <property type="evidence" value="ECO:0000250"/>
    <property type="project" value="AgBase"/>
</dbReference>
<dbReference type="GO" id="GO:0032982">
    <property type="term" value="C:myosin filament"/>
    <property type="evidence" value="ECO:0000250"/>
    <property type="project" value="AgBase"/>
</dbReference>
<dbReference type="GO" id="GO:0005524">
    <property type="term" value="F:ATP binding"/>
    <property type="evidence" value="ECO:0007669"/>
    <property type="project" value="UniProtKB-KW"/>
</dbReference>
<dbReference type="GO" id="GO:0016787">
    <property type="term" value="F:hydrolase activity"/>
    <property type="evidence" value="ECO:0007669"/>
    <property type="project" value="UniProtKB-KW"/>
</dbReference>
<dbReference type="GO" id="GO:0090131">
    <property type="term" value="P:mesenchyme migration"/>
    <property type="evidence" value="ECO:0000250"/>
    <property type="project" value="AgBase"/>
</dbReference>
<dbReference type="GO" id="GO:0010628">
    <property type="term" value="P:positive regulation of gene expression"/>
    <property type="evidence" value="ECO:0000250"/>
    <property type="project" value="AgBase"/>
</dbReference>
<dbReference type="CDD" id="cd10224">
    <property type="entry name" value="ASKHA_NBD_actin"/>
    <property type="match status" value="1"/>
</dbReference>
<dbReference type="FunFam" id="2.30.36.70:FF:000001">
    <property type="entry name" value="Actin, alpha skeletal muscle"/>
    <property type="match status" value="1"/>
</dbReference>
<dbReference type="FunFam" id="3.30.420.40:FF:000131">
    <property type="entry name" value="Actin, alpha skeletal muscle"/>
    <property type="match status" value="1"/>
</dbReference>
<dbReference type="FunFam" id="3.30.420.40:FF:000291">
    <property type="entry name" value="Actin, alpha skeletal muscle"/>
    <property type="match status" value="1"/>
</dbReference>
<dbReference type="FunFam" id="3.90.640.10:FF:000047">
    <property type="entry name" value="Actin, alpha skeletal muscle"/>
    <property type="match status" value="1"/>
</dbReference>
<dbReference type="FunFam" id="3.30.420.40:FF:000058">
    <property type="entry name" value="Putative actin-related protein 5"/>
    <property type="match status" value="1"/>
</dbReference>
<dbReference type="Gene3D" id="3.30.420.40">
    <property type="match status" value="2"/>
</dbReference>
<dbReference type="Gene3D" id="3.90.640.10">
    <property type="entry name" value="Actin, Chain A, domain 4"/>
    <property type="match status" value="1"/>
</dbReference>
<dbReference type="InterPro" id="IPR004000">
    <property type="entry name" value="Actin"/>
</dbReference>
<dbReference type="InterPro" id="IPR020902">
    <property type="entry name" value="Actin/actin-like_CS"/>
</dbReference>
<dbReference type="InterPro" id="IPR004001">
    <property type="entry name" value="Actin_CS"/>
</dbReference>
<dbReference type="InterPro" id="IPR043129">
    <property type="entry name" value="ATPase_NBD"/>
</dbReference>
<dbReference type="PANTHER" id="PTHR11937">
    <property type="entry name" value="ACTIN"/>
    <property type="match status" value="1"/>
</dbReference>
<dbReference type="Pfam" id="PF00022">
    <property type="entry name" value="Actin"/>
    <property type="match status" value="1"/>
</dbReference>
<dbReference type="PRINTS" id="PR00190">
    <property type="entry name" value="ACTIN"/>
</dbReference>
<dbReference type="SMART" id="SM00268">
    <property type="entry name" value="ACTIN"/>
    <property type="match status" value="1"/>
</dbReference>
<dbReference type="SUPFAM" id="SSF53067">
    <property type="entry name" value="Actin-like ATPase domain"/>
    <property type="match status" value="2"/>
</dbReference>
<dbReference type="PROSITE" id="PS00406">
    <property type="entry name" value="ACTINS_1"/>
    <property type="match status" value="1"/>
</dbReference>
<dbReference type="PROSITE" id="PS00432">
    <property type="entry name" value="ACTINS_2"/>
    <property type="match status" value="1"/>
</dbReference>
<dbReference type="PROSITE" id="PS01132">
    <property type="entry name" value="ACTINS_ACT_LIKE"/>
    <property type="match status" value="1"/>
</dbReference>
<proteinExistence type="evidence at transcript level"/>
<organism>
    <name type="scientific">Rattus norvegicus</name>
    <name type="common">Rat</name>
    <dbReference type="NCBI Taxonomy" id="10116"/>
    <lineage>
        <taxon>Eukaryota</taxon>
        <taxon>Metazoa</taxon>
        <taxon>Chordata</taxon>
        <taxon>Craniata</taxon>
        <taxon>Vertebrata</taxon>
        <taxon>Euteleostomi</taxon>
        <taxon>Mammalia</taxon>
        <taxon>Eutheria</taxon>
        <taxon>Euarchontoglires</taxon>
        <taxon>Glires</taxon>
        <taxon>Rodentia</taxon>
        <taxon>Myomorpha</taxon>
        <taxon>Muroidea</taxon>
        <taxon>Muridae</taxon>
        <taxon>Murinae</taxon>
        <taxon>Rattus</taxon>
    </lineage>
</organism>
<feature type="initiator methionine" description="Removed">
    <location>
        <position position="1"/>
    </location>
</feature>
<feature type="chain" id="PRO_0000442953" description="Actin, gamma-enteric smooth muscle, intermediate form" evidence="1">
    <location>
        <begin position="2"/>
        <end position="376"/>
    </location>
</feature>
<feature type="chain" id="PRO_0000442954" description="Actin, gamma-enteric smooth muscle" evidence="2">
    <location>
        <begin position="3"/>
        <end position="376"/>
    </location>
</feature>
<feature type="modified residue" description="N-acetylcysteine; in intermediate form" evidence="1">
    <location>
        <position position="2"/>
    </location>
</feature>
<feature type="modified residue" description="Methionine (R)-sulfoxide" evidence="3">
    <location>
        <position position="45"/>
    </location>
</feature>
<feature type="modified residue" description="Methionine (R)-sulfoxide" evidence="3">
    <location>
        <position position="48"/>
    </location>
</feature>
<feature type="modified residue" description="Tele-methylhistidine" evidence="2">
    <location>
        <position position="74"/>
    </location>
</feature>
<sequence>MCEEETTALVCDNGSGLCKAGFAGDDAPRAVFPSIVGRPRHQGVMVGMGQKDSYVGDEAQSKRGILTLKYPIEHGIITNWDDMEKIWHHSFYNELRVAPEEHPTLLTEAPLNPKANREKMTQIMFETFNVPAMYVAIQAVLSLYASGRTTGIVLDSGDGVTHNVPIYEGYALPHAIMRLDLAGRDLTDYLMKILTERGYSFVTTAEREIVRDIKEKLCYVALDFENEMATAASSSSLEKSYELPDGQVITIGNERFRCPETLFQPSFIGMESAGIHETTYNSIMKCDIDIRKDLYANNVLSGGTTMYPGIADRMQKEITALAPSTMKIKIIAPPERKYSVWIGGSILASLSTFQQMWISKPEYDEAGPSIVHRKCF</sequence>
<keyword id="KW-0007">Acetylation</keyword>
<keyword id="KW-0067">ATP-binding</keyword>
<keyword id="KW-0963">Cytoplasm</keyword>
<keyword id="KW-0206">Cytoskeleton</keyword>
<keyword id="KW-0378">Hydrolase</keyword>
<keyword id="KW-0488">Methylation</keyword>
<keyword id="KW-0514">Muscle protein</keyword>
<keyword id="KW-0547">Nucleotide-binding</keyword>
<keyword id="KW-0558">Oxidation</keyword>
<keyword id="KW-1185">Reference proteome</keyword>
<accession>P63269</accession>
<accession>P12718</accession>
<protein>
    <recommendedName>
        <fullName>Actin, gamma-enteric smooth muscle</fullName>
        <ecNumber evidence="5">3.6.4.-</ecNumber>
    </recommendedName>
    <alternativeName>
        <fullName>Alpha-actin-3</fullName>
    </alternativeName>
    <alternativeName>
        <fullName>Gamma-2-actin</fullName>
    </alternativeName>
    <alternativeName>
        <fullName>Smooth muscle gamma-actin</fullName>
    </alternativeName>
    <component>
        <recommendedName>
            <fullName>Actin, gamma-enteric smooth muscle, intermediate form</fullName>
        </recommendedName>
    </component>
</protein>
<comment type="function">
    <text>Actins are highly conserved proteins that are involved in various types of cell motility and are ubiquitously expressed in all eukaryotic cells.</text>
</comment>
<comment type="catalytic activity">
    <reaction evidence="5">
        <text>ATP + H2O = ADP + phosphate + H(+)</text>
        <dbReference type="Rhea" id="RHEA:13065"/>
        <dbReference type="ChEBI" id="CHEBI:15377"/>
        <dbReference type="ChEBI" id="CHEBI:15378"/>
        <dbReference type="ChEBI" id="CHEBI:30616"/>
        <dbReference type="ChEBI" id="CHEBI:43474"/>
        <dbReference type="ChEBI" id="CHEBI:456216"/>
    </reaction>
</comment>
<comment type="subunit">
    <text>Polymerization of globular actin (G-actin) leads to a structural filament (F-actin) in the form of a two-stranded helix. Each actin can bind to 4 others.</text>
</comment>
<comment type="subcellular location">
    <subcellularLocation>
        <location>Cytoplasm</location>
        <location>Cytoskeleton</location>
    </subcellularLocation>
</comment>
<comment type="PTM">
    <molecule>Actin, gamma-enteric smooth muscle, intermediate form</molecule>
    <text evidence="1">N-terminal cleavage of acetylated cysteine of intermediate muscle actin by ACTMAP.</text>
</comment>
<comment type="PTM">
    <text evidence="3">Oxidation of Met-45 and Met-48 by MICALs (MICAL1, MICAL2 or MICAL3) to form methionine sulfoxide promotes actin filament depolymerization. MICAL1 and MICAL2 produce the (R)-S-oxide form. The (R)-S-oxide form is reverted by MSRB1 and MSRB2, which promotes actin repolymerization.</text>
</comment>
<comment type="PTM">
    <text evidence="4">Monomethylation at Lys-85 (K85me1) regulates actin-myosin interaction and actomyosin-dependent processes. Demethylation by ALKBH4 is required for maintaining actomyosin dynamics supporting normal cleavage furrow ingression during cytokinesis and cell migration.</text>
</comment>
<comment type="PTM">
    <text evidence="2">Methylated at His-74 by SETD3.</text>
</comment>
<comment type="miscellaneous">
    <text>In vertebrates 3 main groups of actin isoforms, alpha, beta and gamma have been identified. The alpha actins are found in muscle tissues and are a major constituent of the contractile apparatus. The beta and gamma actins coexist in most cell types as components of the cytoskeleton and as mediators of internal cell motility.</text>
</comment>
<comment type="similarity">
    <text evidence="6">Belongs to the actin family.</text>
</comment>
<reference key="1">
    <citation type="journal article" date="1988" name="Mol. Cell. Biol.">
        <title>The development expression of the rat alpha-vascular and gamma-enteric smooth muscle isoactins: isolation and characterization of a rat gamma-enteric actin cDNA.</title>
        <authorList>
            <person name="McHugh K.M."/>
            <person name="Lessard J.L."/>
        </authorList>
    </citation>
    <scope>NUCLEOTIDE SEQUENCE [MRNA]</scope>
</reference>
<reference key="2">
    <citation type="journal article" date="2004" name="Genome Res.">
        <title>The status, quality, and expansion of the NIH full-length cDNA project: the Mammalian Gene Collection (MGC).</title>
        <authorList>
            <consortium name="The MGC Project Team"/>
        </authorList>
    </citation>
    <scope>NUCLEOTIDE SEQUENCE [LARGE SCALE MRNA]</scope>
    <source>
        <tissue>Ovary</tissue>
    </source>
</reference>
<evidence type="ECO:0000250" key="1">
    <source>
        <dbReference type="UniProtKB" id="P62737"/>
    </source>
</evidence>
<evidence type="ECO:0000250" key="2">
    <source>
        <dbReference type="UniProtKB" id="P63267"/>
    </source>
</evidence>
<evidence type="ECO:0000250" key="3">
    <source>
        <dbReference type="UniProtKB" id="P63268"/>
    </source>
</evidence>
<evidence type="ECO:0000250" key="4">
    <source>
        <dbReference type="UniProtKB" id="P68133"/>
    </source>
</evidence>
<evidence type="ECO:0000250" key="5">
    <source>
        <dbReference type="UniProtKB" id="P68137"/>
    </source>
</evidence>
<evidence type="ECO:0000305" key="6"/>
<gene>
    <name type="primary">Actg2</name>
    <name type="synonym">Acta3</name>
    <name type="synonym">Actsg</name>
</gene>